<name>TAL_SHESR</name>
<reference key="1">
    <citation type="submission" date="2006-08" db="EMBL/GenBank/DDBJ databases">
        <title>Complete sequence of chromosome 1 of Shewanella sp. MR-7.</title>
        <authorList>
            <person name="Copeland A."/>
            <person name="Lucas S."/>
            <person name="Lapidus A."/>
            <person name="Barry K."/>
            <person name="Detter J.C."/>
            <person name="Glavina del Rio T."/>
            <person name="Hammon N."/>
            <person name="Israni S."/>
            <person name="Dalin E."/>
            <person name="Tice H."/>
            <person name="Pitluck S."/>
            <person name="Kiss H."/>
            <person name="Brettin T."/>
            <person name="Bruce D."/>
            <person name="Han C."/>
            <person name="Tapia R."/>
            <person name="Gilna P."/>
            <person name="Schmutz J."/>
            <person name="Larimer F."/>
            <person name="Land M."/>
            <person name="Hauser L."/>
            <person name="Kyrpides N."/>
            <person name="Mikhailova N."/>
            <person name="Nealson K."/>
            <person name="Konstantinidis K."/>
            <person name="Klappenbach J."/>
            <person name="Tiedje J."/>
            <person name="Richardson P."/>
        </authorList>
    </citation>
    <scope>NUCLEOTIDE SEQUENCE [LARGE SCALE GENOMIC DNA]</scope>
    <source>
        <strain>MR-7</strain>
    </source>
</reference>
<protein>
    <recommendedName>
        <fullName evidence="2">Transaldolase</fullName>
        <ecNumber evidence="2">2.2.1.2</ecNumber>
    </recommendedName>
</protein>
<organism>
    <name type="scientific">Shewanella sp. (strain MR-7)</name>
    <dbReference type="NCBI Taxonomy" id="60481"/>
    <lineage>
        <taxon>Bacteria</taxon>
        <taxon>Pseudomonadati</taxon>
        <taxon>Pseudomonadota</taxon>
        <taxon>Gammaproteobacteria</taxon>
        <taxon>Alteromonadales</taxon>
        <taxon>Shewanellaceae</taxon>
        <taxon>Shewanella</taxon>
    </lineage>
</organism>
<evidence type="ECO:0000250" key="1"/>
<evidence type="ECO:0000255" key="2">
    <source>
        <dbReference type="HAMAP-Rule" id="MF_00492"/>
    </source>
</evidence>
<feature type="chain" id="PRO_1000014529" description="Transaldolase">
    <location>
        <begin position="1"/>
        <end position="318"/>
    </location>
</feature>
<feature type="active site" description="Schiff-base intermediate with substrate" evidence="2">
    <location>
        <position position="132"/>
    </location>
</feature>
<keyword id="KW-0963">Cytoplasm</keyword>
<keyword id="KW-0570">Pentose shunt</keyword>
<keyword id="KW-0704">Schiff base</keyword>
<keyword id="KW-0808">Transferase</keyword>
<gene>
    <name evidence="2" type="primary">tal</name>
    <name type="ordered locus">Shewmr7_3049</name>
</gene>
<proteinExistence type="inferred from homology"/>
<comment type="function">
    <text evidence="2">Transaldolase is important for the balance of metabolites in the pentose-phosphate pathway.</text>
</comment>
<comment type="catalytic activity">
    <reaction evidence="2">
        <text>D-sedoheptulose 7-phosphate + D-glyceraldehyde 3-phosphate = D-erythrose 4-phosphate + beta-D-fructose 6-phosphate</text>
        <dbReference type="Rhea" id="RHEA:17053"/>
        <dbReference type="ChEBI" id="CHEBI:16897"/>
        <dbReference type="ChEBI" id="CHEBI:57483"/>
        <dbReference type="ChEBI" id="CHEBI:57634"/>
        <dbReference type="ChEBI" id="CHEBI:59776"/>
        <dbReference type="EC" id="2.2.1.2"/>
    </reaction>
</comment>
<comment type="pathway">
    <text evidence="2">Carbohydrate degradation; pentose phosphate pathway; D-glyceraldehyde 3-phosphate and beta-D-fructose 6-phosphate from D-ribose 5-phosphate and D-xylulose 5-phosphate (non-oxidative stage): step 2/3.</text>
</comment>
<comment type="subunit">
    <text evidence="1">Homodimer.</text>
</comment>
<comment type="subcellular location">
    <subcellularLocation>
        <location evidence="2">Cytoplasm</location>
    </subcellularLocation>
</comment>
<comment type="similarity">
    <text evidence="2">Belongs to the transaldolase family. Type 1 subfamily.</text>
</comment>
<accession>Q0HS72</accession>
<sequence>MANTLEQLKSYTTIVADTGDIEAIKRYQPEDATTNPSLILKAAQIPEYSALIDNAIAWAKLQSADIEQQIDDASDKLAVNIGVEILKLVPGRISTEVDARLSFDKEKSIAKAHKLVRLYQEAGVDKSRILIKLASTWEGICAAKELEQEGINCNLTLLFSFAQARACAEAGVYLISPFVGRILDWYKKDTGKDYDAVNDPGVVSVTEIYNYYKQHGYNTVVMGASFRNIGEIIELAGCDRLTIGPSLLEELANSQVAIQPKLIPASTTVAAGEPLTEAQFRWDFNQDPMAVDKLAEGIRNFAIDQGKLEVMLKAKLAN</sequence>
<dbReference type="EC" id="2.2.1.2" evidence="2"/>
<dbReference type="EMBL" id="CP000444">
    <property type="protein sequence ID" value="ABI44033.1"/>
    <property type="molecule type" value="Genomic_DNA"/>
</dbReference>
<dbReference type="SMR" id="Q0HS72"/>
<dbReference type="KEGG" id="shm:Shewmr7_3049"/>
<dbReference type="HOGENOM" id="CLU_047470_0_1_6"/>
<dbReference type="UniPathway" id="UPA00115">
    <property type="reaction ID" value="UER00414"/>
</dbReference>
<dbReference type="GO" id="GO:0005829">
    <property type="term" value="C:cytosol"/>
    <property type="evidence" value="ECO:0007669"/>
    <property type="project" value="TreeGrafter"/>
</dbReference>
<dbReference type="GO" id="GO:0004801">
    <property type="term" value="F:transaldolase activity"/>
    <property type="evidence" value="ECO:0000250"/>
    <property type="project" value="UniProtKB"/>
</dbReference>
<dbReference type="GO" id="GO:0005975">
    <property type="term" value="P:carbohydrate metabolic process"/>
    <property type="evidence" value="ECO:0007669"/>
    <property type="project" value="InterPro"/>
</dbReference>
<dbReference type="GO" id="GO:0006098">
    <property type="term" value="P:pentose-phosphate shunt"/>
    <property type="evidence" value="ECO:0007669"/>
    <property type="project" value="UniProtKB-UniRule"/>
</dbReference>
<dbReference type="CDD" id="cd00957">
    <property type="entry name" value="Transaldolase_TalAB"/>
    <property type="match status" value="1"/>
</dbReference>
<dbReference type="FunFam" id="3.20.20.70:FF:000002">
    <property type="entry name" value="Transaldolase"/>
    <property type="match status" value="1"/>
</dbReference>
<dbReference type="Gene3D" id="3.20.20.70">
    <property type="entry name" value="Aldolase class I"/>
    <property type="match status" value="1"/>
</dbReference>
<dbReference type="HAMAP" id="MF_00492">
    <property type="entry name" value="Transaldolase_1"/>
    <property type="match status" value="1"/>
</dbReference>
<dbReference type="InterPro" id="IPR013785">
    <property type="entry name" value="Aldolase_TIM"/>
</dbReference>
<dbReference type="InterPro" id="IPR001585">
    <property type="entry name" value="TAL/FSA"/>
</dbReference>
<dbReference type="InterPro" id="IPR004730">
    <property type="entry name" value="Transaldolase_1"/>
</dbReference>
<dbReference type="InterPro" id="IPR018225">
    <property type="entry name" value="Transaldolase_AS"/>
</dbReference>
<dbReference type="NCBIfam" id="NF009001">
    <property type="entry name" value="PRK12346.1"/>
    <property type="match status" value="1"/>
</dbReference>
<dbReference type="NCBIfam" id="TIGR00874">
    <property type="entry name" value="talAB"/>
    <property type="match status" value="1"/>
</dbReference>
<dbReference type="PANTHER" id="PTHR10683">
    <property type="entry name" value="TRANSALDOLASE"/>
    <property type="match status" value="1"/>
</dbReference>
<dbReference type="PANTHER" id="PTHR10683:SF18">
    <property type="entry name" value="TRANSALDOLASE"/>
    <property type="match status" value="1"/>
</dbReference>
<dbReference type="Pfam" id="PF00923">
    <property type="entry name" value="TAL_FSA"/>
    <property type="match status" value="1"/>
</dbReference>
<dbReference type="SUPFAM" id="SSF51569">
    <property type="entry name" value="Aldolase"/>
    <property type="match status" value="1"/>
</dbReference>
<dbReference type="PROSITE" id="PS01054">
    <property type="entry name" value="TRANSALDOLASE_1"/>
    <property type="match status" value="1"/>
</dbReference>
<dbReference type="PROSITE" id="PS00958">
    <property type="entry name" value="TRANSALDOLASE_2"/>
    <property type="match status" value="1"/>
</dbReference>